<organism>
    <name type="scientific">Yarrowia lipolytica (strain CLIB 122 / E 150)</name>
    <name type="common">Yeast</name>
    <name type="synonym">Candida lipolytica</name>
    <dbReference type="NCBI Taxonomy" id="284591"/>
    <lineage>
        <taxon>Eukaryota</taxon>
        <taxon>Fungi</taxon>
        <taxon>Dikarya</taxon>
        <taxon>Ascomycota</taxon>
        <taxon>Saccharomycotina</taxon>
        <taxon>Dipodascomycetes</taxon>
        <taxon>Dipodascales</taxon>
        <taxon>Dipodascales incertae sedis</taxon>
        <taxon>Yarrowia</taxon>
    </lineage>
</organism>
<gene>
    <name evidence="1" type="primary">NIP1</name>
    <name type="ordered locus">YALI0D22572g</name>
</gene>
<dbReference type="EMBL" id="CR382130">
    <property type="protein sequence ID" value="CAG81355.1"/>
    <property type="molecule type" value="Genomic_DNA"/>
</dbReference>
<dbReference type="RefSeq" id="XP_503157.1">
    <property type="nucleotide sequence ID" value="XM_503157.1"/>
</dbReference>
<dbReference type="SMR" id="Q6C855"/>
<dbReference type="FunCoup" id="Q6C855">
    <property type="interactions" value="1215"/>
</dbReference>
<dbReference type="STRING" id="284591.Q6C855"/>
<dbReference type="EnsemblFungi" id="CAG81355">
    <property type="protein sequence ID" value="CAG81355"/>
    <property type="gene ID" value="YALI0_D22572g"/>
</dbReference>
<dbReference type="KEGG" id="yli:2910336"/>
<dbReference type="VEuPathDB" id="FungiDB:YALI0_D22572g"/>
<dbReference type="HOGENOM" id="CLU_004304_0_2_1"/>
<dbReference type="InParanoid" id="Q6C855"/>
<dbReference type="OMA" id="FRCGLIK"/>
<dbReference type="OrthoDB" id="88200at4891"/>
<dbReference type="Proteomes" id="UP000001300">
    <property type="component" value="Chromosome D"/>
</dbReference>
<dbReference type="GO" id="GO:0010494">
    <property type="term" value="C:cytoplasmic stress granule"/>
    <property type="evidence" value="ECO:0007669"/>
    <property type="project" value="EnsemblFungi"/>
</dbReference>
<dbReference type="GO" id="GO:0016282">
    <property type="term" value="C:eukaryotic 43S preinitiation complex"/>
    <property type="evidence" value="ECO:0007669"/>
    <property type="project" value="UniProtKB-UniRule"/>
</dbReference>
<dbReference type="GO" id="GO:0033290">
    <property type="term" value="C:eukaryotic 48S preinitiation complex"/>
    <property type="evidence" value="ECO:0007669"/>
    <property type="project" value="UniProtKB-UniRule"/>
</dbReference>
<dbReference type="GO" id="GO:0005852">
    <property type="term" value="C:eukaryotic translation initiation factor 3 complex"/>
    <property type="evidence" value="ECO:0000318"/>
    <property type="project" value="GO_Central"/>
</dbReference>
<dbReference type="GO" id="GO:0071540">
    <property type="term" value="C:eukaryotic translation initiation factor 3 complex, eIF3e"/>
    <property type="evidence" value="ECO:0007669"/>
    <property type="project" value="EnsemblFungi"/>
</dbReference>
<dbReference type="GO" id="GO:0071541">
    <property type="term" value="C:eukaryotic translation initiation factor 3 complex, eIF3m"/>
    <property type="evidence" value="ECO:0007669"/>
    <property type="project" value="EnsemblFungi"/>
</dbReference>
<dbReference type="GO" id="GO:0043614">
    <property type="term" value="C:multi-eIF complex"/>
    <property type="evidence" value="ECO:0007669"/>
    <property type="project" value="EnsemblFungi"/>
</dbReference>
<dbReference type="GO" id="GO:0008541">
    <property type="term" value="C:proteasome regulatory particle, lid subcomplex"/>
    <property type="evidence" value="ECO:0007669"/>
    <property type="project" value="UniProtKB-ARBA"/>
</dbReference>
<dbReference type="GO" id="GO:0003723">
    <property type="term" value="F:RNA binding"/>
    <property type="evidence" value="ECO:0007669"/>
    <property type="project" value="InterPro"/>
</dbReference>
<dbReference type="GO" id="GO:0003743">
    <property type="term" value="F:translation initiation factor activity"/>
    <property type="evidence" value="ECO:0007669"/>
    <property type="project" value="UniProtKB-UniRule"/>
</dbReference>
<dbReference type="GO" id="GO:0031369">
    <property type="term" value="F:translation initiation factor binding"/>
    <property type="evidence" value="ECO:0000318"/>
    <property type="project" value="GO_Central"/>
</dbReference>
<dbReference type="GO" id="GO:0001732">
    <property type="term" value="P:formation of cytoplasmic translation initiation complex"/>
    <property type="evidence" value="ECO:0007669"/>
    <property type="project" value="UniProtKB-UniRule"/>
</dbReference>
<dbReference type="GO" id="GO:0006413">
    <property type="term" value="P:translational initiation"/>
    <property type="evidence" value="ECO:0000318"/>
    <property type="project" value="GO_Central"/>
</dbReference>
<dbReference type="FunFam" id="1.10.10.10:FF:000300">
    <property type="entry name" value="Eukaryotic translation initiation factor 3 subunit C"/>
    <property type="match status" value="1"/>
</dbReference>
<dbReference type="Gene3D" id="1.10.10.10">
    <property type="entry name" value="Winged helix-like DNA-binding domain superfamily/Winged helix DNA-binding domain"/>
    <property type="match status" value="1"/>
</dbReference>
<dbReference type="HAMAP" id="MF_03002">
    <property type="entry name" value="eIF3c"/>
    <property type="match status" value="1"/>
</dbReference>
<dbReference type="InterPro" id="IPR027516">
    <property type="entry name" value="EIF3C"/>
</dbReference>
<dbReference type="InterPro" id="IPR008905">
    <property type="entry name" value="EIF3C_N_dom"/>
</dbReference>
<dbReference type="InterPro" id="IPR000717">
    <property type="entry name" value="PCI_dom"/>
</dbReference>
<dbReference type="InterPro" id="IPR036388">
    <property type="entry name" value="WH-like_DNA-bd_sf"/>
</dbReference>
<dbReference type="InterPro" id="IPR036390">
    <property type="entry name" value="WH_DNA-bd_sf"/>
</dbReference>
<dbReference type="PANTHER" id="PTHR13937">
    <property type="entry name" value="EUKARYOTIC TRANSLATION INITATION FACTOR 3, SUBUNIT 8 EIF3S8 -RELATED"/>
    <property type="match status" value="1"/>
</dbReference>
<dbReference type="PANTHER" id="PTHR13937:SF0">
    <property type="entry name" value="EUKARYOTIC TRANSLATION INITIATION FACTOR 3 SUBUNIT C-RELATED"/>
    <property type="match status" value="1"/>
</dbReference>
<dbReference type="Pfam" id="PF05470">
    <property type="entry name" value="eIF-3c_N"/>
    <property type="match status" value="1"/>
</dbReference>
<dbReference type="Pfam" id="PF01399">
    <property type="entry name" value="PCI"/>
    <property type="match status" value="1"/>
</dbReference>
<dbReference type="SMART" id="SM00088">
    <property type="entry name" value="PINT"/>
    <property type="match status" value="1"/>
</dbReference>
<dbReference type="SUPFAM" id="SSF46785">
    <property type="entry name" value="Winged helix' DNA-binding domain"/>
    <property type="match status" value="1"/>
</dbReference>
<dbReference type="PROSITE" id="PS50250">
    <property type="entry name" value="PCI"/>
    <property type="match status" value="1"/>
</dbReference>
<sequence>MSRFFAGGSDSDDSSSDEDLYGSGSESGSDFSQDEQDGGDDNDDDMSDDSMFADDSDDDSDDDEDLGGKGASYFLKSSTVADSDDEEDTGKKTVLSAKDKLLAELANCSKLIDNGKRINDWVLIQGEFDKLNKAMERFTKQRHGLPPKVYIQCIVELEEFLNTQLEDKAGIKKMNASNSRAFNTVKQRVRKNNKEYEAAIAKYSSGGDVAEEEEEENKEDKPKPRAKDEFVLTAPSQASNEEFTTVGKAGKALVSPTDMFKTLKTVLESRGKKNTDREDQVRQLENLLPSASTVYQKISVYTMLVSTRLDLSSASAALAPENWLKVVGDLNDLLSILEENIDTYHVIETAPEIEDVEKGPVAREDGVKLIPGSVASLVERVDDEFTKALQFMDPHTTEYVDRLRDETKLYQTLLRVQMYIEHVSDEKDTLGLARILVRRVDHLYFKPNNVINMTEQIAWGGVKGDSKATPRPTEKDLTSSTYPTTLISNMCSVLYKQSNTVFRTKAMLAHVYHYALNDEYYKARDMFLMSHLQSSIASAEPQLQVLFNRTLVQLGLCAFRSGLIAEAQQSLQEVCSSPRLKELLGQGLAKYAQAGVVDKQRVLPFHTHINLELLECVFLCSSLLMEIPFMAAHNTSIDAKKKVISKLFRRMLDYHERQVFCGPPENTRDHIMQAAKALQRGDWEAARDLVCAIKIWSLLPNPEAIKAMLTDKLQIEGLRTYLFTYWNHYSTLSLSTLADMFQLPVKDVAAIVAKMIAQEELPGSLDQKTNSVVFTQAVQQTKLQQLAVALSDKVIQLAERNERLVAGGYQFDKMTQPQKRKTQRAR</sequence>
<evidence type="ECO:0000255" key="1">
    <source>
        <dbReference type="HAMAP-Rule" id="MF_03002"/>
    </source>
</evidence>
<evidence type="ECO:0000255" key="2">
    <source>
        <dbReference type="PROSITE-ProRule" id="PRU01185"/>
    </source>
</evidence>
<evidence type="ECO:0000256" key="3">
    <source>
        <dbReference type="SAM" id="MobiDB-lite"/>
    </source>
</evidence>
<keyword id="KW-0963">Cytoplasm</keyword>
<keyword id="KW-0396">Initiation factor</keyword>
<keyword id="KW-0648">Protein biosynthesis</keyword>
<keyword id="KW-1185">Reference proteome</keyword>
<protein>
    <recommendedName>
        <fullName evidence="1">Eukaryotic translation initiation factor 3 subunit C</fullName>
        <shortName evidence="1">eIF3c</shortName>
    </recommendedName>
    <alternativeName>
        <fullName evidence="1">Eukaryotic translation initiation factor 3 93 kDa subunit homolog</fullName>
        <shortName evidence="1">eIF3 p93</shortName>
    </alternativeName>
    <alternativeName>
        <fullName evidence="1">Translation initiation factor eIF3, p93 subunit homolog</fullName>
    </alternativeName>
</protein>
<feature type="chain" id="PRO_0000364291" description="Eukaryotic translation initiation factor 3 subunit C">
    <location>
        <begin position="1"/>
        <end position="826"/>
    </location>
</feature>
<feature type="domain" description="PCI" evidence="2">
    <location>
        <begin position="605"/>
        <end position="779"/>
    </location>
</feature>
<feature type="region of interest" description="Disordered" evidence="3">
    <location>
        <begin position="1"/>
        <end position="71"/>
    </location>
</feature>
<feature type="region of interest" description="Disordered" evidence="3">
    <location>
        <begin position="205"/>
        <end position="227"/>
    </location>
</feature>
<feature type="compositionally biased region" description="Acidic residues" evidence="3">
    <location>
        <begin position="10"/>
        <end position="20"/>
    </location>
</feature>
<feature type="compositionally biased region" description="Low complexity" evidence="3">
    <location>
        <begin position="21"/>
        <end position="30"/>
    </location>
</feature>
<feature type="compositionally biased region" description="Acidic residues" evidence="3">
    <location>
        <begin position="32"/>
        <end position="65"/>
    </location>
</feature>
<feature type="compositionally biased region" description="Basic and acidic residues" evidence="3">
    <location>
        <begin position="218"/>
        <end position="227"/>
    </location>
</feature>
<reference key="1">
    <citation type="journal article" date="2004" name="Nature">
        <title>Genome evolution in yeasts.</title>
        <authorList>
            <person name="Dujon B."/>
            <person name="Sherman D."/>
            <person name="Fischer G."/>
            <person name="Durrens P."/>
            <person name="Casaregola S."/>
            <person name="Lafontaine I."/>
            <person name="de Montigny J."/>
            <person name="Marck C."/>
            <person name="Neuveglise C."/>
            <person name="Talla E."/>
            <person name="Goffard N."/>
            <person name="Frangeul L."/>
            <person name="Aigle M."/>
            <person name="Anthouard V."/>
            <person name="Babour A."/>
            <person name="Barbe V."/>
            <person name="Barnay S."/>
            <person name="Blanchin S."/>
            <person name="Beckerich J.-M."/>
            <person name="Beyne E."/>
            <person name="Bleykasten C."/>
            <person name="Boisrame A."/>
            <person name="Boyer J."/>
            <person name="Cattolico L."/>
            <person name="Confanioleri F."/>
            <person name="de Daruvar A."/>
            <person name="Despons L."/>
            <person name="Fabre E."/>
            <person name="Fairhead C."/>
            <person name="Ferry-Dumazet H."/>
            <person name="Groppi A."/>
            <person name="Hantraye F."/>
            <person name="Hennequin C."/>
            <person name="Jauniaux N."/>
            <person name="Joyet P."/>
            <person name="Kachouri R."/>
            <person name="Kerrest A."/>
            <person name="Koszul R."/>
            <person name="Lemaire M."/>
            <person name="Lesur I."/>
            <person name="Ma L."/>
            <person name="Muller H."/>
            <person name="Nicaud J.-M."/>
            <person name="Nikolski M."/>
            <person name="Oztas S."/>
            <person name="Ozier-Kalogeropoulos O."/>
            <person name="Pellenz S."/>
            <person name="Potier S."/>
            <person name="Richard G.-F."/>
            <person name="Straub M.-L."/>
            <person name="Suleau A."/>
            <person name="Swennen D."/>
            <person name="Tekaia F."/>
            <person name="Wesolowski-Louvel M."/>
            <person name="Westhof E."/>
            <person name="Wirth B."/>
            <person name="Zeniou-Meyer M."/>
            <person name="Zivanovic Y."/>
            <person name="Bolotin-Fukuhara M."/>
            <person name="Thierry A."/>
            <person name="Bouchier C."/>
            <person name="Caudron B."/>
            <person name="Scarpelli C."/>
            <person name="Gaillardin C."/>
            <person name="Weissenbach J."/>
            <person name="Wincker P."/>
            <person name="Souciet J.-L."/>
        </authorList>
    </citation>
    <scope>NUCLEOTIDE SEQUENCE [LARGE SCALE GENOMIC DNA]</scope>
    <source>
        <strain>CLIB 122 / E 150</strain>
    </source>
</reference>
<proteinExistence type="inferred from homology"/>
<accession>Q6C855</accession>
<name>EIF3C_YARLI</name>
<comment type="function">
    <text evidence="1">Component of the eukaryotic translation initiation factor 3 (eIF-3) complex, which is involved in protein synthesis of a specialized repertoire of mRNAs and, together with other initiation factors, stimulates binding of mRNA and methionyl-tRNAi to the 40S ribosome. The eIF-3 complex specifically targets and initiates translation of a subset of mRNAs involved in cell proliferation.</text>
</comment>
<comment type="subunit">
    <text evidence="1">Component of the eukaryotic translation initiation factor 3 (eIF-3) complex.</text>
</comment>
<comment type="subcellular location">
    <subcellularLocation>
        <location evidence="1">Cytoplasm</location>
    </subcellularLocation>
</comment>
<comment type="similarity">
    <text evidence="1">Belongs to the eIF-3 subunit C family.</text>
</comment>